<accession>Q9PM71</accession>
<accession>Q0P824</accession>
<evidence type="ECO:0000250" key="1"/>
<evidence type="ECO:0000305" key="2"/>
<organism>
    <name type="scientific">Campylobacter jejuni subsp. jejuni serotype O:2 (strain ATCC 700819 / NCTC 11168)</name>
    <dbReference type="NCBI Taxonomy" id="192222"/>
    <lineage>
        <taxon>Bacteria</taxon>
        <taxon>Pseudomonadati</taxon>
        <taxon>Campylobacterota</taxon>
        <taxon>Epsilonproteobacteria</taxon>
        <taxon>Campylobacterales</taxon>
        <taxon>Campylobacteraceae</taxon>
        <taxon>Campylobacter</taxon>
    </lineage>
</organism>
<proteinExistence type="inferred from homology"/>
<keyword id="KW-0028">Amino-acid biosynthesis</keyword>
<keyword id="KW-0067">ATP-binding</keyword>
<keyword id="KW-0963">Cytoplasm</keyword>
<keyword id="KW-0368">Histidine biosynthesis</keyword>
<keyword id="KW-0378">Hydrolase</keyword>
<keyword id="KW-0511">Multifunctional enzyme</keyword>
<keyword id="KW-0547">Nucleotide-binding</keyword>
<keyword id="KW-1185">Reference proteome</keyword>
<sequence>MQNFKELNEKIAWQKVDNLLPVIIQDAKTCEVLMLGFMNNEALEKSLESGKVVFFSRTKQRLWMKGEESGNFLNIIDLSLDCDNDTLLILANPVGPTCHTGDISCFEKISKNADFVFLARLEKLINARKNADENTSYTAKLFKSGTKRIAQKVGEEGVETALAATVKDKEELICEAADLMYHLSVLLADANLSFSDVISKLKERHKA</sequence>
<feature type="chain" id="PRO_0000136408" description="Histidine biosynthesis bifunctional protein HisIE">
    <location>
        <begin position="1"/>
        <end position="207"/>
    </location>
</feature>
<feature type="region of interest" description="Phosphoribosyl-AMP cyclohydrolase">
    <location>
        <begin position="1"/>
        <end position="117"/>
    </location>
</feature>
<feature type="region of interest" description="Phosphoribosyl-ATP pyrophosphohydrolase">
    <location>
        <begin position="118"/>
        <end position="207"/>
    </location>
</feature>
<dbReference type="EC" id="3.5.4.19"/>
<dbReference type="EC" id="3.6.1.31"/>
<dbReference type="EMBL" id="AL111168">
    <property type="protein sequence ID" value="CAL35701.1"/>
    <property type="molecule type" value="Genomic_DNA"/>
</dbReference>
<dbReference type="PIR" id="B81256">
    <property type="entry name" value="B81256"/>
</dbReference>
<dbReference type="RefSeq" id="WP_002851143.1">
    <property type="nucleotide sequence ID" value="NZ_SZUC01000002.1"/>
</dbReference>
<dbReference type="RefSeq" id="YP_002344973.1">
    <property type="nucleotide sequence ID" value="NC_002163.1"/>
</dbReference>
<dbReference type="SMR" id="Q9PM71"/>
<dbReference type="IntAct" id="Q9PM71">
    <property type="interactions" value="7"/>
</dbReference>
<dbReference type="STRING" id="192222.Cj1604"/>
<dbReference type="PaxDb" id="192222-Cj1604"/>
<dbReference type="DNASU" id="905159"/>
<dbReference type="EnsemblBacteria" id="CAL35701">
    <property type="protein sequence ID" value="CAL35701"/>
    <property type="gene ID" value="Cj1604"/>
</dbReference>
<dbReference type="GeneID" id="905159"/>
<dbReference type="KEGG" id="cje:Cj1604"/>
<dbReference type="PATRIC" id="fig|192222.6.peg.1580"/>
<dbReference type="eggNOG" id="COG0139">
    <property type="taxonomic scope" value="Bacteria"/>
</dbReference>
<dbReference type="eggNOG" id="COG0140">
    <property type="taxonomic scope" value="Bacteria"/>
</dbReference>
<dbReference type="HOGENOM" id="CLU_048577_3_1_7"/>
<dbReference type="OrthoDB" id="9795769at2"/>
<dbReference type="UniPathway" id="UPA00031">
    <property type="reaction ID" value="UER00007"/>
</dbReference>
<dbReference type="UniPathway" id="UPA00031">
    <property type="reaction ID" value="UER00008"/>
</dbReference>
<dbReference type="Proteomes" id="UP000000799">
    <property type="component" value="Chromosome"/>
</dbReference>
<dbReference type="GO" id="GO:0005737">
    <property type="term" value="C:cytoplasm"/>
    <property type="evidence" value="ECO:0007669"/>
    <property type="project" value="UniProtKB-SubCell"/>
</dbReference>
<dbReference type="GO" id="GO:0005524">
    <property type="term" value="F:ATP binding"/>
    <property type="evidence" value="ECO:0007669"/>
    <property type="project" value="UniProtKB-KW"/>
</dbReference>
<dbReference type="GO" id="GO:0004635">
    <property type="term" value="F:phosphoribosyl-AMP cyclohydrolase activity"/>
    <property type="evidence" value="ECO:0007669"/>
    <property type="project" value="UniProtKB-UniRule"/>
</dbReference>
<dbReference type="GO" id="GO:0004636">
    <property type="term" value="F:phosphoribosyl-ATP diphosphatase activity"/>
    <property type="evidence" value="ECO:0007669"/>
    <property type="project" value="UniProtKB-UniRule"/>
</dbReference>
<dbReference type="GO" id="GO:0000105">
    <property type="term" value="P:L-histidine biosynthetic process"/>
    <property type="evidence" value="ECO:0007669"/>
    <property type="project" value="UniProtKB-UniRule"/>
</dbReference>
<dbReference type="CDD" id="cd11534">
    <property type="entry name" value="NTP-PPase_HisIE_like"/>
    <property type="match status" value="1"/>
</dbReference>
<dbReference type="FunFam" id="1.10.287.1080:FF:000002">
    <property type="entry name" value="Histidine biosynthesis bifunctional protein HisIE"/>
    <property type="match status" value="1"/>
</dbReference>
<dbReference type="FunFam" id="3.10.20.810:FF:000001">
    <property type="entry name" value="Histidine biosynthesis bifunctional protein HisIE"/>
    <property type="match status" value="1"/>
</dbReference>
<dbReference type="Gene3D" id="1.10.287.1080">
    <property type="entry name" value="MazG-like"/>
    <property type="match status" value="1"/>
</dbReference>
<dbReference type="Gene3D" id="3.10.20.810">
    <property type="entry name" value="Phosphoribosyl-AMP cyclohydrolase"/>
    <property type="match status" value="1"/>
</dbReference>
<dbReference type="HAMAP" id="MF_01020">
    <property type="entry name" value="HisE"/>
    <property type="match status" value="1"/>
</dbReference>
<dbReference type="HAMAP" id="MF_01019">
    <property type="entry name" value="HisIE"/>
    <property type="match status" value="1"/>
</dbReference>
<dbReference type="InterPro" id="IPR023019">
    <property type="entry name" value="His_synth_HisIE"/>
</dbReference>
<dbReference type="InterPro" id="IPR008179">
    <property type="entry name" value="HisE"/>
</dbReference>
<dbReference type="InterPro" id="IPR021130">
    <property type="entry name" value="PRib-ATP_PPHydrolase-like"/>
</dbReference>
<dbReference type="InterPro" id="IPR002496">
    <property type="entry name" value="PRib_AMP_CycHydrolase_dom"/>
</dbReference>
<dbReference type="InterPro" id="IPR038019">
    <property type="entry name" value="PRib_AMP_CycHydrolase_sf"/>
</dbReference>
<dbReference type="NCBIfam" id="TIGR03188">
    <property type="entry name" value="histidine_hisI"/>
    <property type="match status" value="1"/>
</dbReference>
<dbReference type="NCBIfam" id="NF000768">
    <property type="entry name" value="PRK00051.1"/>
    <property type="match status" value="1"/>
</dbReference>
<dbReference type="NCBIfam" id="NF002747">
    <property type="entry name" value="PRK02759.1"/>
    <property type="match status" value="1"/>
</dbReference>
<dbReference type="PANTHER" id="PTHR42945">
    <property type="entry name" value="HISTIDINE BIOSYNTHESIS BIFUNCTIONAL PROTEIN"/>
    <property type="match status" value="1"/>
</dbReference>
<dbReference type="PANTHER" id="PTHR42945:SF9">
    <property type="entry name" value="HISTIDINE BIOSYNTHESIS BIFUNCTIONAL PROTEIN HISIE"/>
    <property type="match status" value="1"/>
</dbReference>
<dbReference type="Pfam" id="PF01502">
    <property type="entry name" value="PRA-CH"/>
    <property type="match status" value="1"/>
</dbReference>
<dbReference type="Pfam" id="PF01503">
    <property type="entry name" value="PRA-PH"/>
    <property type="match status" value="1"/>
</dbReference>
<dbReference type="SUPFAM" id="SSF101386">
    <property type="entry name" value="all-alpha NTP pyrophosphatases"/>
    <property type="match status" value="1"/>
</dbReference>
<dbReference type="SUPFAM" id="SSF141734">
    <property type="entry name" value="HisI-like"/>
    <property type="match status" value="1"/>
</dbReference>
<protein>
    <recommendedName>
        <fullName>Histidine biosynthesis bifunctional protein HisIE</fullName>
    </recommendedName>
    <domain>
        <recommendedName>
            <fullName>Phosphoribosyl-AMP cyclohydrolase</fullName>
            <shortName>PRA-CH</shortName>
            <ecNumber>3.5.4.19</ecNumber>
        </recommendedName>
    </domain>
    <domain>
        <recommendedName>
            <fullName>Phosphoribosyl-ATP pyrophosphatase</fullName>
            <shortName>PRA-PH</shortName>
            <ecNumber>3.6.1.31</ecNumber>
        </recommendedName>
    </domain>
</protein>
<comment type="catalytic activity">
    <reaction>
        <text>1-(5-phospho-beta-D-ribosyl)-ATP + H2O = 1-(5-phospho-beta-D-ribosyl)-5'-AMP + diphosphate + H(+)</text>
        <dbReference type="Rhea" id="RHEA:22828"/>
        <dbReference type="ChEBI" id="CHEBI:15377"/>
        <dbReference type="ChEBI" id="CHEBI:15378"/>
        <dbReference type="ChEBI" id="CHEBI:33019"/>
        <dbReference type="ChEBI" id="CHEBI:59457"/>
        <dbReference type="ChEBI" id="CHEBI:73183"/>
        <dbReference type="EC" id="3.6.1.31"/>
    </reaction>
</comment>
<comment type="catalytic activity">
    <reaction>
        <text>1-(5-phospho-beta-D-ribosyl)-5'-AMP + H2O = 1-(5-phospho-beta-D-ribosyl)-5-[(5-phospho-beta-D-ribosylamino)methylideneamino]imidazole-4-carboxamide</text>
        <dbReference type="Rhea" id="RHEA:20049"/>
        <dbReference type="ChEBI" id="CHEBI:15377"/>
        <dbReference type="ChEBI" id="CHEBI:58435"/>
        <dbReference type="ChEBI" id="CHEBI:59457"/>
        <dbReference type="EC" id="3.5.4.19"/>
    </reaction>
</comment>
<comment type="pathway">
    <text>Amino-acid biosynthesis; L-histidine biosynthesis; L-histidine from 5-phospho-alpha-D-ribose 1-diphosphate: step 2/9.</text>
</comment>
<comment type="pathway">
    <text>Amino-acid biosynthesis; L-histidine biosynthesis; L-histidine from 5-phospho-alpha-D-ribose 1-diphosphate: step 3/9.</text>
</comment>
<comment type="subcellular location">
    <subcellularLocation>
        <location evidence="1">Cytoplasm</location>
    </subcellularLocation>
</comment>
<comment type="similarity">
    <text evidence="2">In the N-terminal section; belongs to the PRA-CH family.</text>
</comment>
<comment type="similarity">
    <text evidence="2">In the C-terminal section; belongs to the PRA-PH family.</text>
</comment>
<reference key="1">
    <citation type="journal article" date="2000" name="Nature">
        <title>The genome sequence of the food-borne pathogen Campylobacter jejuni reveals hypervariable sequences.</title>
        <authorList>
            <person name="Parkhill J."/>
            <person name="Wren B.W."/>
            <person name="Mungall K.L."/>
            <person name="Ketley J.M."/>
            <person name="Churcher C.M."/>
            <person name="Basham D."/>
            <person name="Chillingworth T."/>
            <person name="Davies R.M."/>
            <person name="Feltwell T."/>
            <person name="Holroyd S."/>
            <person name="Jagels K."/>
            <person name="Karlyshev A.V."/>
            <person name="Moule S."/>
            <person name="Pallen M.J."/>
            <person name="Penn C.W."/>
            <person name="Quail M.A."/>
            <person name="Rajandream M.A."/>
            <person name="Rutherford K.M."/>
            <person name="van Vliet A.H.M."/>
            <person name="Whitehead S."/>
            <person name="Barrell B.G."/>
        </authorList>
    </citation>
    <scope>NUCLEOTIDE SEQUENCE [LARGE SCALE GENOMIC DNA]</scope>
    <source>
        <strain>ATCC 700819 / NCTC 11168</strain>
    </source>
</reference>
<name>HIS2_CAMJE</name>
<gene>
    <name type="primary">hisI</name>
    <name type="synonym">hisIE</name>
    <name type="ordered locus">Cj1604</name>
</gene>